<protein>
    <recommendedName>
        <fullName evidence="1">Glycogen debranching enzyme</fullName>
        <ecNumber evidence="1">3.2.1.196</ecNumber>
    </recommendedName>
    <alternativeName>
        <fullName evidence="1">Limit dextrin alpha-1,6-maltotetraose-hydrolase</fullName>
    </alternativeName>
</protein>
<reference key="1">
    <citation type="journal article" date="2007" name="J. Bacteriol.">
        <title>The genome sequence of avian pathogenic Escherichia coli strain O1:K1:H7 shares strong similarities with human extraintestinal pathogenic E. coli genomes.</title>
        <authorList>
            <person name="Johnson T.J."/>
            <person name="Kariyawasam S."/>
            <person name="Wannemuehler Y."/>
            <person name="Mangiamele P."/>
            <person name="Johnson S.J."/>
            <person name="Doetkott C."/>
            <person name="Skyberg J.A."/>
            <person name="Lynne A.M."/>
            <person name="Johnson J.R."/>
            <person name="Nolan L.K."/>
        </authorList>
    </citation>
    <scope>NUCLEOTIDE SEQUENCE [LARGE SCALE GENOMIC DNA]</scope>
</reference>
<organism>
    <name type="scientific">Escherichia coli O1:K1 / APEC</name>
    <dbReference type="NCBI Taxonomy" id="405955"/>
    <lineage>
        <taxon>Bacteria</taxon>
        <taxon>Pseudomonadati</taxon>
        <taxon>Pseudomonadota</taxon>
        <taxon>Gammaproteobacteria</taxon>
        <taxon>Enterobacterales</taxon>
        <taxon>Enterobacteriaceae</taxon>
        <taxon>Escherichia</taxon>
    </lineage>
</organism>
<dbReference type="EC" id="3.2.1.196" evidence="1"/>
<dbReference type="EMBL" id="CP000468">
    <property type="protein sequence ID" value="ABJ02904.1"/>
    <property type="molecule type" value="Genomic_DNA"/>
</dbReference>
<dbReference type="RefSeq" id="WP_000192575.1">
    <property type="nucleotide sequence ID" value="NZ_CADILS010000075.1"/>
</dbReference>
<dbReference type="SMR" id="A1AGW4"/>
<dbReference type="CAZy" id="CBM48">
    <property type="family name" value="Carbohydrate-Binding Module Family 48"/>
</dbReference>
<dbReference type="CAZy" id="GH13">
    <property type="family name" value="Glycoside Hydrolase Family 13"/>
</dbReference>
<dbReference type="KEGG" id="ecv:APECO1_3026"/>
<dbReference type="HOGENOM" id="CLU_011725_1_1_6"/>
<dbReference type="UniPathway" id="UPA00165"/>
<dbReference type="Proteomes" id="UP000008216">
    <property type="component" value="Chromosome"/>
</dbReference>
<dbReference type="GO" id="GO:0004133">
    <property type="term" value="F:glycogen debranching enzyme activity"/>
    <property type="evidence" value="ECO:0007669"/>
    <property type="project" value="UniProtKB-UniRule"/>
</dbReference>
<dbReference type="GO" id="GO:0004553">
    <property type="term" value="F:hydrolase activity, hydrolyzing O-glycosyl compounds"/>
    <property type="evidence" value="ECO:0007669"/>
    <property type="project" value="InterPro"/>
</dbReference>
<dbReference type="GO" id="GO:0005980">
    <property type="term" value="P:glycogen catabolic process"/>
    <property type="evidence" value="ECO:0007669"/>
    <property type="project" value="UniProtKB-UniRule"/>
</dbReference>
<dbReference type="CDD" id="cd11326">
    <property type="entry name" value="AmyAc_Glg_debranch"/>
    <property type="match status" value="1"/>
</dbReference>
<dbReference type="CDD" id="cd02856">
    <property type="entry name" value="E_set_GDE_Isoamylase_N"/>
    <property type="match status" value="1"/>
</dbReference>
<dbReference type="FunFam" id="2.60.40.10:FF:000468">
    <property type="entry name" value="Glycogen debranching enzyme"/>
    <property type="match status" value="1"/>
</dbReference>
<dbReference type="FunFam" id="3.20.20.80:FF:000031">
    <property type="entry name" value="Glycogen debranching enzyme"/>
    <property type="match status" value="1"/>
</dbReference>
<dbReference type="Gene3D" id="3.20.20.80">
    <property type="entry name" value="Glycosidases"/>
    <property type="match status" value="1"/>
</dbReference>
<dbReference type="Gene3D" id="2.60.40.1180">
    <property type="entry name" value="Golgi alpha-mannosidase II"/>
    <property type="match status" value="1"/>
</dbReference>
<dbReference type="Gene3D" id="2.60.40.10">
    <property type="entry name" value="Immunoglobulins"/>
    <property type="match status" value="1"/>
</dbReference>
<dbReference type="HAMAP" id="MF_01248">
    <property type="entry name" value="GlgX"/>
    <property type="match status" value="1"/>
</dbReference>
<dbReference type="InterPro" id="IPR040784">
    <property type="entry name" value="GlgX_C"/>
</dbReference>
<dbReference type="InterPro" id="IPR044505">
    <property type="entry name" value="GlgX_Isoamylase_N_E_set"/>
</dbReference>
<dbReference type="InterPro" id="IPR006047">
    <property type="entry name" value="Glyco_hydro_13_cat_dom"/>
</dbReference>
<dbReference type="InterPro" id="IPR004193">
    <property type="entry name" value="Glyco_hydro_13_N"/>
</dbReference>
<dbReference type="InterPro" id="IPR013780">
    <property type="entry name" value="Glyco_hydro_b"/>
</dbReference>
<dbReference type="InterPro" id="IPR022844">
    <property type="entry name" value="Glycogen_debranch_bac"/>
</dbReference>
<dbReference type="InterPro" id="IPR011837">
    <property type="entry name" value="Glycogen_debranch_GlgX"/>
</dbReference>
<dbReference type="InterPro" id="IPR017853">
    <property type="entry name" value="Glycoside_hydrolase_SF"/>
</dbReference>
<dbReference type="InterPro" id="IPR013783">
    <property type="entry name" value="Ig-like_fold"/>
</dbReference>
<dbReference type="InterPro" id="IPR014756">
    <property type="entry name" value="Ig_E-set"/>
</dbReference>
<dbReference type="NCBIfam" id="TIGR02100">
    <property type="entry name" value="glgX_debranch"/>
    <property type="match status" value="1"/>
</dbReference>
<dbReference type="NCBIfam" id="NF002983">
    <property type="entry name" value="PRK03705.1"/>
    <property type="match status" value="1"/>
</dbReference>
<dbReference type="PANTHER" id="PTHR43002">
    <property type="entry name" value="GLYCOGEN DEBRANCHING ENZYME"/>
    <property type="match status" value="1"/>
</dbReference>
<dbReference type="Pfam" id="PF00128">
    <property type="entry name" value="Alpha-amylase"/>
    <property type="match status" value="1"/>
</dbReference>
<dbReference type="Pfam" id="PF02922">
    <property type="entry name" value="CBM_48"/>
    <property type="match status" value="1"/>
</dbReference>
<dbReference type="Pfam" id="PF18390">
    <property type="entry name" value="GlgX_C"/>
    <property type="match status" value="1"/>
</dbReference>
<dbReference type="SMART" id="SM00642">
    <property type="entry name" value="Aamy"/>
    <property type="match status" value="1"/>
</dbReference>
<dbReference type="SUPFAM" id="SSF51445">
    <property type="entry name" value="(Trans)glycosidases"/>
    <property type="match status" value="1"/>
</dbReference>
<dbReference type="SUPFAM" id="SSF81296">
    <property type="entry name" value="E set domains"/>
    <property type="match status" value="1"/>
</dbReference>
<evidence type="ECO:0000255" key="1">
    <source>
        <dbReference type="HAMAP-Rule" id="MF_01248"/>
    </source>
</evidence>
<evidence type="ECO:0000256" key="2">
    <source>
        <dbReference type="SAM" id="MobiDB-lite"/>
    </source>
</evidence>
<gene>
    <name evidence="1" type="primary">glgX</name>
    <name type="ordered locus">Ecok1_34100</name>
    <name type="ORF">APECO1_3026</name>
</gene>
<comment type="function">
    <text evidence="1">Removes maltotriose and maltotetraose chains that are attached by 1,6-alpha-linkage to the limit dextrin main chain, generating a debranched limit dextrin.</text>
</comment>
<comment type="catalytic activity">
    <reaction evidence="1">
        <text>Hydrolysis of (1-&gt;6)-alpha-D-glucosidic linkages to branches with degrees of polymerization of three or four glucose residues in limit dextrin.</text>
        <dbReference type="EC" id="3.2.1.196"/>
    </reaction>
</comment>
<comment type="pathway">
    <text evidence="1">Glycan degradation; glycogen degradation.</text>
</comment>
<comment type="similarity">
    <text evidence="1">Belongs to the glycosyl hydrolase 13 family.</text>
</comment>
<sequence>MTQLAIGKPTPLGAHYDGQGVNFTLFSAHAERVELCVFDANGQEHRYDLPGHSGDIWHGYLPDARPGLRYGYRVHGPWQPAEGHRFNPAKLLIDPCARQIDGEFKDNPLLHAGHNEPDYRDNASIAPKCVVVVDHYDWEDDAPPRMPWGCTIIYEAHVKGLTYLHPEIPVEIRGTYKALGHPVMINYLKQLGITALELLPVAQFASEPRLQRMGLSNYWGYNPVAMFALHPAYACSPETALDEFRDAIKALHKAGIEVILDIVLNHSAELDLDGPLFSLRGIDNRSYYWIREDGDYHNWTGCGNTLNLSHPAVVDYASACLRYWVETCHVDGFRFDLAAVMGRTPEFRQDAPLFTAIQNCPVLSQVKLIAEPWDIAPGGYQVGNFPPLFAEWNDHFRDAARRFWLHYDLPLGAFAGRFAASSDVFKRNGRLPSAAINLVTAHDGFTLRDCVCFNHKHNEANGEENRDGTNNNYSNNHGKEGLGGTLDLVERRRDSIHALLTTLLLSQGTPMLLAGDEHGHSQRGNNNAYCQDNQLTWLDWSQASSGLTAFTAALIHLRKRIPALMENRWWEEGDGNVRWLNRYAQPLSTDEWQNGPKQLQILLSDRFLIAINATLEVTEIVLPAGEWHAIPPFAGEDNPVITAVWQGPAHGLCVFQR</sequence>
<name>GLGX_ECOK1</name>
<accession>A1AGW4</accession>
<keyword id="KW-0119">Carbohydrate metabolism</keyword>
<keyword id="KW-0321">Glycogen metabolism</keyword>
<keyword id="KW-0326">Glycosidase</keyword>
<keyword id="KW-0378">Hydrolase</keyword>
<keyword id="KW-1185">Reference proteome</keyword>
<proteinExistence type="inferred from homology"/>
<feature type="chain" id="PRO_1000067100" description="Glycogen debranching enzyme">
    <location>
        <begin position="1"/>
        <end position="657"/>
    </location>
</feature>
<feature type="region of interest" description="Disordered" evidence="2">
    <location>
        <begin position="460"/>
        <end position="479"/>
    </location>
</feature>
<feature type="active site" description="Nucleophile" evidence="1">
    <location>
        <position position="336"/>
    </location>
</feature>
<feature type="active site" description="Proton donor" evidence="1">
    <location>
        <position position="371"/>
    </location>
</feature>
<feature type="site" description="Transition state stabilizer" evidence="1">
    <location>
        <position position="443"/>
    </location>
</feature>